<sequence>MGDSDDFYWNWNNEAVCNWIEQLGFPHKEAFEDYHILGKDIDLLSSNDLRDMGIESVGHRIDILSAIQSMKKQQKDKLQQENKDQELKNIEESYKKLEEKTEHLSDDNVSLEKRVEYLETENTKLVKTLNSLNSEFLQLLRKIAINVKEGRQLTTENSSDTSSMTHPVQPSPSVLGSFDLEVNDSLTNAEKNRKLNVNLTYNEVLCSMLQRYRIDPNTWMSYDLLINYDDKEHAIPMDVKPLQLFRNLQKRGKSPSFVLSRRSC</sequence>
<evidence type="ECO:0000255" key="1">
    <source>
        <dbReference type="PROSITE-ProRule" id="PRU00166"/>
    </source>
</evidence>
<evidence type="ECO:0000255" key="2">
    <source>
        <dbReference type="PROSITE-ProRule" id="PRU00184"/>
    </source>
</evidence>
<evidence type="ECO:0000305" key="3"/>
<feature type="chain" id="PRO_0000072264" description="Sexual differentiation protein ste4">
    <location>
        <begin position="1"/>
        <end position="264"/>
    </location>
</feature>
<feature type="domain" description="SAM" evidence="2">
    <location>
        <begin position="11"/>
        <end position="73"/>
    </location>
</feature>
<feature type="domain" description="Ras-associating" evidence="1">
    <location>
        <begin position="176"/>
        <end position="264"/>
    </location>
</feature>
<feature type="region of interest" description="Leucine-zipper">
    <location>
        <begin position="111"/>
        <end position="139"/>
    </location>
</feature>
<gene>
    <name type="primary">ste4</name>
    <name type="ORF">SPAC1565.04c</name>
</gene>
<accession>P36622</accession>
<name>STE4_SCHPO</name>
<organism>
    <name type="scientific">Schizosaccharomyces pombe (strain 972 / ATCC 24843)</name>
    <name type="common">Fission yeast</name>
    <dbReference type="NCBI Taxonomy" id="284812"/>
    <lineage>
        <taxon>Eukaryota</taxon>
        <taxon>Fungi</taxon>
        <taxon>Dikarya</taxon>
        <taxon>Ascomycota</taxon>
        <taxon>Taphrinomycotina</taxon>
        <taxon>Schizosaccharomycetes</taxon>
        <taxon>Schizosaccharomycetales</taxon>
        <taxon>Schizosaccharomycetaceae</taxon>
        <taxon>Schizosaccharomyces</taxon>
    </lineage>
</organism>
<dbReference type="EMBL" id="X61924">
    <property type="protein sequence ID" value="CAA43926.1"/>
    <property type="molecule type" value="Genomic_DNA"/>
</dbReference>
<dbReference type="EMBL" id="CU329670">
    <property type="protein sequence ID" value="CAB99271.1"/>
    <property type="molecule type" value="Genomic_DNA"/>
</dbReference>
<dbReference type="PIR" id="S22600">
    <property type="entry name" value="S22600"/>
</dbReference>
<dbReference type="RefSeq" id="NP_593283.1">
    <property type="nucleotide sequence ID" value="NM_001018713.2"/>
</dbReference>
<dbReference type="SMR" id="P36622"/>
<dbReference type="BioGRID" id="278173">
    <property type="interactions" value="7"/>
</dbReference>
<dbReference type="DIP" id="DIP-683N"/>
<dbReference type="IntAct" id="P36622">
    <property type="interactions" value="1"/>
</dbReference>
<dbReference type="STRING" id="284812.P36622"/>
<dbReference type="iPTMnet" id="P36622"/>
<dbReference type="PaxDb" id="4896-SPAC1565.04c.1"/>
<dbReference type="EnsemblFungi" id="SPAC1565.04c.1">
    <property type="protein sequence ID" value="SPAC1565.04c.1:pep"/>
    <property type="gene ID" value="SPAC1565.04c"/>
</dbReference>
<dbReference type="GeneID" id="2541677"/>
<dbReference type="KEGG" id="spo:2541677"/>
<dbReference type="PomBase" id="SPAC1565.04c">
    <property type="gene designation" value="ste4"/>
</dbReference>
<dbReference type="VEuPathDB" id="FungiDB:SPAC1565.04c"/>
<dbReference type="eggNOG" id="KOG4375">
    <property type="taxonomic scope" value="Eukaryota"/>
</dbReference>
<dbReference type="HOGENOM" id="CLU_1054333_0_0_1"/>
<dbReference type="InParanoid" id="P36622"/>
<dbReference type="OMA" id="PINEWDY"/>
<dbReference type="PhylomeDB" id="P36622"/>
<dbReference type="PRO" id="PR:P36622"/>
<dbReference type="Proteomes" id="UP000002485">
    <property type="component" value="Chromosome I"/>
</dbReference>
<dbReference type="GO" id="GO:0005829">
    <property type="term" value="C:cytosol"/>
    <property type="evidence" value="ECO:0007005"/>
    <property type="project" value="PomBase"/>
</dbReference>
<dbReference type="GO" id="GO:0043539">
    <property type="term" value="F:protein serine/threonine kinase activator activity"/>
    <property type="evidence" value="ECO:0000269"/>
    <property type="project" value="PomBase"/>
</dbReference>
<dbReference type="GO" id="GO:0051321">
    <property type="term" value="P:meiotic cell cycle"/>
    <property type="evidence" value="ECO:0007669"/>
    <property type="project" value="UniProtKB-KW"/>
</dbReference>
<dbReference type="GO" id="GO:0071507">
    <property type="term" value="P:pheromone response MAPK cascade"/>
    <property type="evidence" value="ECO:0000315"/>
    <property type="project" value="PomBase"/>
</dbReference>
<dbReference type="GO" id="GO:0007165">
    <property type="term" value="P:signal transduction"/>
    <property type="evidence" value="ECO:0000318"/>
    <property type="project" value="GO_Central"/>
</dbReference>
<dbReference type="CDD" id="cd01786">
    <property type="entry name" value="RA_STE50"/>
    <property type="match status" value="1"/>
</dbReference>
<dbReference type="CDD" id="cd09487">
    <property type="entry name" value="SAM_superfamily"/>
    <property type="match status" value="1"/>
</dbReference>
<dbReference type="Gene3D" id="1.10.150.50">
    <property type="entry name" value="Transcription Factor, Ets-1"/>
    <property type="match status" value="1"/>
</dbReference>
<dbReference type="InterPro" id="IPR000159">
    <property type="entry name" value="RA_dom"/>
</dbReference>
<dbReference type="InterPro" id="IPR001660">
    <property type="entry name" value="SAM"/>
</dbReference>
<dbReference type="InterPro" id="IPR013761">
    <property type="entry name" value="SAM/pointed_sf"/>
</dbReference>
<dbReference type="PANTHER" id="PTHR46829">
    <property type="entry name" value="STERILE ALPHA MOTIF DOMAIN-CONTAINING PROTEIN 15"/>
    <property type="match status" value="1"/>
</dbReference>
<dbReference type="PANTHER" id="PTHR46829:SF1">
    <property type="entry name" value="STERILE ALPHA MOTIF DOMAIN-CONTAINING PROTEIN 15"/>
    <property type="match status" value="1"/>
</dbReference>
<dbReference type="Pfam" id="PF00788">
    <property type="entry name" value="RA"/>
    <property type="match status" value="1"/>
</dbReference>
<dbReference type="Pfam" id="PF07647">
    <property type="entry name" value="SAM_2"/>
    <property type="match status" value="1"/>
</dbReference>
<dbReference type="SMART" id="SM00314">
    <property type="entry name" value="RA"/>
    <property type="match status" value="1"/>
</dbReference>
<dbReference type="SMART" id="SM00454">
    <property type="entry name" value="SAM"/>
    <property type="match status" value="1"/>
</dbReference>
<dbReference type="SUPFAM" id="SSF47769">
    <property type="entry name" value="SAM/Pointed domain"/>
    <property type="match status" value="1"/>
</dbReference>
<dbReference type="PROSITE" id="PS50200">
    <property type="entry name" value="RA"/>
    <property type="match status" value="1"/>
</dbReference>
<dbReference type="PROSITE" id="PS50105">
    <property type="entry name" value="SAM_DOMAIN"/>
    <property type="match status" value="1"/>
</dbReference>
<reference key="1">
    <citation type="journal article" date="1991" name="Nucleic Acids Res.">
        <title>The ste4+ gene, essential for sexual differentiation of Schizosaccharomyces pombe, encodes a protein with a leucine zipper motif.</title>
        <authorList>
            <person name="Okazaki N."/>
            <person name="Okazaki K."/>
            <person name="Tanaka K."/>
            <person name="Okayama H."/>
        </authorList>
    </citation>
    <scope>NUCLEOTIDE SEQUENCE [GENOMIC DNA]</scope>
    <source>
        <strain>972 / ATCC 24843</strain>
    </source>
</reference>
<reference key="2">
    <citation type="journal article" date="2002" name="Nature">
        <title>The genome sequence of Schizosaccharomyces pombe.</title>
        <authorList>
            <person name="Wood V."/>
            <person name="Gwilliam R."/>
            <person name="Rajandream M.A."/>
            <person name="Lyne M.H."/>
            <person name="Lyne R."/>
            <person name="Stewart A."/>
            <person name="Sgouros J.G."/>
            <person name="Peat N."/>
            <person name="Hayles J."/>
            <person name="Baker S.G."/>
            <person name="Basham D."/>
            <person name="Bowman S."/>
            <person name="Brooks K."/>
            <person name="Brown D."/>
            <person name="Brown S."/>
            <person name="Chillingworth T."/>
            <person name="Churcher C.M."/>
            <person name="Collins M."/>
            <person name="Connor R."/>
            <person name="Cronin A."/>
            <person name="Davis P."/>
            <person name="Feltwell T."/>
            <person name="Fraser A."/>
            <person name="Gentles S."/>
            <person name="Goble A."/>
            <person name="Hamlin N."/>
            <person name="Harris D.E."/>
            <person name="Hidalgo J."/>
            <person name="Hodgson G."/>
            <person name="Holroyd S."/>
            <person name="Hornsby T."/>
            <person name="Howarth S."/>
            <person name="Huckle E.J."/>
            <person name="Hunt S."/>
            <person name="Jagels K."/>
            <person name="James K.D."/>
            <person name="Jones L."/>
            <person name="Jones M."/>
            <person name="Leather S."/>
            <person name="McDonald S."/>
            <person name="McLean J."/>
            <person name="Mooney P."/>
            <person name="Moule S."/>
            <person name="Mungall K.L."/>
            <person name="Murphy L.D."/>
            <person name="Niblett D."/>
            <person name="Odell C."/>
            <person name="Oliver K."/>
            <person name="O'Neil S."/>
            <person name="Pearson D."/>
            <person name="Quail M.A."/>
            <person name="Rabbinowitsch E."/>
            <person name="Rutherford K.M."/>
            <person name="Rutter S."/>
            <person name="Saunders D."/>
            <person name="Seeger K."/>
            <person name="Sharp S."/>
            <person name="Skelton J."/>
            <person name="Simmonds M.N."/>
            <person name="Squares R."/>
            <person name="Squares S."/>
            <person name="Stevens K."/>
            <person name="Taylor K."/>
            <person name="Taylor R.G."/>
            <person name="Tivey A."/>
            <person name="Walsh S.V."/>
            <person name="Warren T."/>
            <person name="Whitehead S."/>
            <person name="Woodward J.R."/>
            <person name="Volckaert G."/>
            <person name="Aert R."/>
            <person name="Robben J."/>
            <person name="Grymonprez B."/>
            <person name="Weltjens I."/>
            <person name="Vanstreels E."/>
            <person name="Rieger M."/>
            <person name="Schaefer M."/>
            <person name="Mueller-Auer S."/>
            <person name="Gabel C."/>
            <person name="Fuchs M."/>
            <person name="Duesterhoeft A."/>
            <person name="Fritzc C."/>
            <person name="Holzer E."/>
            <person name="Moestl D."/>
            <person name="Hilbert H."/>
            <person name="Borzym K."/>
            <person name="Langer I."/>
            <person name="Beck A."/>
            <person name="Lehrach H."/>
            <person name="Reinhardt R."/>
            <person name="Pohl T.M."/>
            <person name="Eger P."/>
            <person name="Zimmermann W."/>
            <person name="Wedler H."/>
            <person name="Wambutt R."/>
            <person name="Purnelle B."/>
            <person name="Goffeau A."/>
            <person name="Cadieu E."/>
            <person name="Dreano S."/>
            <person name="Gloux S."/>
            <person name="Lelaure V."/>
            <person name="Mottier S."/>
            <person name="Galibert F."/>
            <person name="Aves S.J."/>
            <person name="Xiang Z."/>
            <person name="Hunt C."/>
            <person name="Moore K."/>
            <person name="Hurst S.M."/>
            <person name="Lucas M."/>
            <person name="Rochet M."/>
            <person name="Gaillardin C."/>
            <person name="Tallada V.A."/>
            <person name="Garzon A."/>
            <person name="Thode G."/>
            <person name="Daga R.R."/>
            <person name="Cruzado L."/>
            <person name="Jimenez J."/>
            <person name="Sanchez M."/>
            <person name="del Rey F."/>
            <person name="Benito J."/>
            <person name="Dominguez A."/>
            <person name="Revuelta J.L."/>
            <person name="Moreno S."/>
            <person name="Armstrong J."/>
            <person name="Forsburg S.L."/>
            <person name="Cerutti L."/>
            <person name="Lowe T."/>
            <person name="McCombie W.R."/>
            <person name="Paulsen I."/>
            <person name="Potashkin J."/>
            <person name="Shpakovski G.V."/>
            <person name="Ussery D."/>
            <person name="Barrell B.G."/>
            <person name="Nurse P."/>
        </authorList>
    </citation>
    <scope>NUCLEOTIDE SEQUENCE [LARGE SCALE GENOMIC DNA]</scope>
    <source>
        <strain>972 / ATCC 24843</strain>
    </source>
</reference>
<proteinExistence type="evidence at transcript level"/>
<protein>
    <recommendedName>
        <fullName>Sexual differentiation protein ste4</fullName>
    </recommendedName>
</protein>
<comment type="function">
    <text>Essential for mating and meiosis.</text>
</comment>
<comment type="subunit">
    <text evidence="3">Homodimer or heterodimer with another leucine-zipper protein.</text>
</comment>
<comment type="induction">
    <text>By nitrogen starvation.</text>
</comment>
<keyword id="KW-0469">Meiosis</keyword>
<keyword id="KW-1185">Reference proteome</keyword>
<keyword id="KW-0346">Stress response</keyword>